<name>SYY_YERPN</name>
<proteinExistence type="inferred from homology"/>
<comment type="function">
    <text evidence="1">Catalyzes the attachment of tyrosine to tRNA(Tyr) in a two-step reaction: tyrosine is first activated by ATP to form Tyr-AMP and then transferred to the acceptor end of tRNA(Tyr).</text>
</comment>
<comment type="catalytic activity">
    <reaction evidence="1">
        <text>tRNA(Tyr) + L-tyrosine + ATP = L-tyrosyl-tRNA(Tyr) + AMP + diphosphate + H(+)</text>
        <dbReference type="Rhea" id="RHEA:10220"/>
        <dbReference type="Rhea" id="RHEA-COMP:9706"/>
        <dbReference type="Rhea" id="RHEA-COMP:9707"/>
        <dbReference type="ChEBI" id="CHEBI:15378"/>
        <dbReference type="ChEBI" id="CHEBI:30616"/>
        <dbReference type="ChEBI" id="CHEBI:33019"/>
        <dbReference type="ChEBI" id="CHEBI:58315"/>
        <dbReference type="ChEBI" id="CHEBI:78442"/>
        <dbReference type="ChEBI" id="CHEBI:78536"/>
        <dbReference type="ChEBI" id="CHEBI:456215"/>
        <dbReference type="EC" id="6.1.1.1"/>
    </reaction>
</comment>
<comment type="subunit">
    <text evidence="1">Homodimer.</text>
</comment>
<comment type="subcellular location">
    <subcellularLocation>
        <location evidence="1">Cytoplasm</location>
    </subcellularLocation>
</comment>
<comment type="similarity">
    <text evidence="1">Belongs to the class-I aminoacyl-tRNA synthetase family. TyrS type 1 subfamily.</text>
</comment>
<sequence length="424" mass="47158">MTSSNLIKQLQERGLVAQVTDEDALAERLAQGPISLYCGFDPTADSLHLGHLVPLLCLKRFQLAGHRPVALVGGATGMIGDPSFKASERKLNTEDTVNEWVEKIRHQVSPFLDFDCGENSAIAANNYDWFGGMNVLTFLRDIGKHFSVNQMINKEAVKQRLNRDDSGISFTEFSYNLLQAYDFACLNKNHGVALQIGGSDQWGNITSGIDLTRRLHQQQVYGLTVPLITKADGTKFGKTEGGAVWLDPKKTSPYKFYQFWINTADADVYRFLKFFTFMSLEEINALEEEDKNSGKAPRAQYVLAENVTGMVHGPEGLAAAKRITDSLFSGDLHDMTEADFAQLAQDGMPTVELNRDADLQQALVNAELVPSRGQARTMIGSNAVAINGEKQADPEYVFTDADRLFGRYTLLRRGKKHYCLISWL</sequence>
<feature type="chain" id="PRO_1000088645" description="Tyrosine--tRNA ligase">
    <location>
        <begin position="1"/>
        <end position="424"/>
    </location>
</feature>
<feature type="domain" description="S4 RNA-binding" evidence="1">
    <location>
        <begin position="357"/>
        <end position="414"/>
    </location>
</feature>
<feature type="short sequence motif" description="'HIGH' region">
    <location>
        <begin position="42"/>
        <end position="51"/>
    </location>
</feature>
<feature type="short sequence motif" description="'KMSKS' region">
    <location>
        <begin position="235"/>
        <end position="239"/>
    </location>
</feature>
<feature type="binding site" evidence="1">
    <location>
        <position position="37"/>
    </location>
    <ligand>
        <name>L-tyrosine</name>
        <dbReference type="ChEBI" id="CHEBI:58315"/>
    </ligand>
</feature>
<feature type="binding site" evidence="1">
    <location>
        <position position="175"/>
    </location>
    <ligand>
        <name>L-tyrosine</name>
        <dbReference type="ChEBI" id="CHEBI:58315"/>
    </ligand>
</feature>
<feature type="binding site" evidence="1">
    <location>
        <position position="179"/>
    </location>
    <ligand>
        <name>L-tyrosine</name>
        <dbReference type="ChEBI" id="CHEBI:58315"/>
    </ligand>
</feature>
<feature type="binding site" evidence="1">
    <location>
        <position position="238"/>
    </location>
    <ligand>
        <name>ATP</name>
        <dbReference type="ChEBI" id="CHEBI:30616"/>
    </ligand>
</feature>
<gene>
    <name evidence="1" type="primary">tyrS</name>
    <name type="ordered locus">YPN_1826</name>
    <name type="ORF">YP516_2028</name>
</gene>
<organism>
    <name type="scientific">Yersinia pestis bv. Antiqua (strain Nepal516)</name>
    <dbReference type="NCBI Taxonomy" id="377628"/>
    <lineage>
        <taxon>Bacteria</taxon>
        <taxon>Pseudomonadati</taxon>
        <taxon>Pseudomonadota</taxon>
        <taxon>Gammaproteobacteria</taxon>
        <taxon>Enterobacterales</taxon>
        <taxon>Yersiniaceae</taxon>
        <taxon>Yersinia</taxon>
    </lineage>
</organism>
<evidence type="ECO:0000255" key="1">
    <source>
        <dbReference type="HAMAP-Rule" id="MF_02006"/>
    </source>
</evidence>
<reference key="1">
    <citation type="journal article" date="2006" name="J. Bacteriol.">
        <title>Complete genome sequence of Yersinia pestis strains Antiqua and Nepal516: evidence of gene reduction in an emerging pathogen.</title>
        <authorList>
            <person name="Chain P.S.G."/>
            <person name="Hu P."/>
            <person name="Malfatti S.A."/>
            <person name="Radnedge L."/>
            <person name="Larimer F."/>
            <person name="Vergez L.M."/>
            <person name="Worsham P."/>
            <person name="Chu M.C."/>
            <person name="Andersen G.L."/>
        </authorList>
    </citation>
    <scope>NUCLEOTIDE SEQUENCE [LARGE SCALE GENOMIC DNA]</scope>
    <source>
        <strain>Nepal516</strain>
    </source>
</reference>
<reference key="2">
    <citation type="submission" date="2009-04" db="EMBL/GenBank/DDBJ databases">
        <title>Yersinia pestis Nepal516A whole genome shotgun sequencing project.</title>
        <authorList>
            <person name="Plunkett G. III"/>
            <person name="Anderson B.D."/>
            <person name="Baumler D.J."/>
            <person name="Burland V."/>
            <person name="Cabot E.L."/>
            <person name="Glasner J.D."/>
            <person name="Mau B."/>
            <person name="Neeno-Eckwall E."/>
            <person name="Perna N.T."/>
            <person name="Munk A.C."/>
            <person name="Tapia R."/>
            <person name="Green L.D."/>
            <person name="Rogers Y.C."/>
            <person name="Detter J.C."/>
            <person name="Bruce D.C."/>
            <person name="Brettin T.S."/>
        </authorList>
    </citation>
    <scope>NUCLEOTIDE SEQUENCE [LARGE SCALE GENOMIC DNA]</scope>
    <source>
        <strain>Nepal516</strain>
    </source>
</reference>
<keyword id="KW-0030">Aminoacyl-tRNA synthetase</keyword>
<keyword id="KW-0067">ATP-binding</keyword>
<keyword id="KW-0963">Cytoplasm</keyword>
<keyword id="KW-0436">Ligase</keyword>
<keyword id="KW-0547">Nucleotide-binding</keyword>
<keyword id="KW-0648">Protein biosynthesis</keyword>
<keyword id="KW-0694">RNA-binding</keyword>
<dbReference type="EC" id="6.1.1.1" evidence="1"/>
<dbReference type="EMBL" id="CP000305">
    <property type="protein sequence ID" value="ABG18155.1"/>
    <property type="molecule type" value="Genomic_DNA"/>
</dbReference>
<dbReference type="EMBL" id="ACNQ01000010">
    <property type="protein sequence ID" value="EEO76728.1"/>
    <property type="molecule type" value="Genomic_DNA"/>
</dbReference>
<dbReference type="RefSeq" id="WP_002210960.1">
    <property type="nucleotide sequence ID" value="NZ_ACNQ01000010.1"/>
</dbReference>
<dbReference type="SMR" id="Q1CIM5"/>
<dbReference type="GeneID" id="57976306"/>
<dbReference type="KEGG" id="ypn:YPN_1826"/>
<dbReference type="HOGENOM" id="CLU_024003_0_3_6"/>
<dbReference type="Proteomes" id="UP000008936">
    <property type="component" value="Chromosome"/>
</dbReference>
<dbReference type="GO" id="GO:0005829">
    <property type="term" value="C:cytosol"/>
    <property type="evidence" value="ECO:0007669"/>
    <property type="project" value="TreeGrafter"/>
</dbReference>
<dbReference type="GO" id="GO:0005524">
    <property type="term" value="F:ATP binding"/>
    <property type="evidence" value="ECO:0007669"/>
    <property type="project" value="UniProtKB-UniRule"/>
</dbReference>
<dbReference type="GO" id="GO:0003723">
    <property type="term" value="F:RNA binding"/>
    <property type="evidence" value="ECO:0007669"/>
    <property type="project" value="UniProtKB-KW"/>
</dbReference>
<dbReference type="GO" id="GO:0004831">
    <property type="term" value="F:tyrosine-tRNA ligase activity"/>
    <property type="evidence" value="ECO:0007669"/>
    <property type="project" value="UniProtKB-UniRule"/>
</dbReference>
<dbReference type="GO" id="GO:0006437">
    <property type="term" value="P:tyrosyl-tRNA aminoacylation"/>
    <property type="evidence" value="ECO:0007669"/>
    <property type="project" value="UniProtKB-UniRule"/>
</dbReference>
<dbReference type="CDD" id="cd00165">
    <property type="entry name" value="S4"/>
    <property type="match status" value="1"/>
</dbReference>
<dbReference type="CDD" id="cd00805">
    <property type="entry name" value="TyrRS_core"/>
    <property type="match status" value="1"/>
</dbReference>
<dbReference type="FunFam" id="1.10.240.10:FF:000001">
    <property type="entry name" value="Tyrosine--tRNA ligase"/>
    <property type="match status" value="1"/>
</dbReference>
<dbReference type="FunFam" id="3.10.290.10:FF:000007">
    <property type="entry name" value="Tyrosine--tRNA ligase"/>
    <property type="match status" value="1"/>
</dbReference>
<dbReference type="FunFam" id="3.40.50.620:FF:000008">
    <property type="entry name" value="Tyrosine--tRNA ligase"/>
    <property type="match status" value="1"/>
</dbReference>
<dbReference type="Gene3D" id="3.40.50.620">
    <property type="entry name" value="HUPs"/>
    <property type="match status" value="1"/>
</dbReference>
<dbReference type="Gene3D" id="3.10.290.10">
    <property type="entry name" value="RNA-binding S4 domain"/>
    <property type="match status" value="1"/>
</dbReference>
<dbReference type="Gene3D" id="1.10.240.10">
    <property type="entry name" value="Tyrosyl-Transfer RNA Synthetase"/>
    <property type="match status" value="1"/>
</dbReference>
<dbReference type="HAMAP" id="MF_02006">
    <property type="entry name" value="Tyr_tRNA_synth_type1"/>
    <property type="match status" value="1"/>
</dbReference>
<dbReference type="InterPro" id="IPR001412">
    <property type="entry name" value="aa-tRNA-synth_I_CS"/>
</dbReference>
<dbReference type="InterPro" id="IPR002305">
    <property type="entry name" value="aa-tRNA-synth_Ic"/>
</dbReference>
<dbReference type="InterPro" id="IPR014729">
    <property type="entry name" value="Rossmann-like_a/b/a_fold"/>
</dbReference>
<dbReference type="InterPro" id="IPR002942">
    <property type="entry name" value="S4_RNA-bd"/>
</dbReference>
<dbReference type="InterPro" id="IPR036986">
    <property type="entry name" value="S4_RNA-bd_sf"/>
</dbReference>
<dbReference type="InterPro" id="IPR054608">
    <property type="entry name" value="SYY-like_C"/>
</dbReference>
<dbReference type="InterPro" id="IPR002307">
    <property type="entry name" value="Tyr-tRNA-ligase"/>
</dbReference>
<dbReference type="InterPro" id="IPR024088">
    <property type="entry name" value="Tyr-tRNA-ligase_bac-type"/>
</dbReference>
<dbReference type="InterPro" id="IPR024107">
    <property type="entry name" value="Tyr-tRNA-ligase_bac_1"/>
</dbReference>
<dbReference type="NCBIfam" id="TIGR00234">
    <property type="entry name" value="tyrS"/>
    <property type="match status" value="1"/>
</dbReference>
<dbReference type="PANTHER" id="PTHR11766:SF0">
    <property type="entry name" value="TYROSINE--TRNA LIGASE, MITOCHONDRIAL"/>
    <property type="match status" value="1"/>
</dbReference>
<dbReference type="PANTHER" id="PTHR11766">
    <property type="entry name" value="TYROSYL-TRNA SYNTHETASE"/>
    <property type="match status" value="1"/>
</dbReference>
<dbReference type="Pfam" id="PF22421">
    <property type="entry name" value="SYY_C-terminal"/>
    <property type="match status" value="1"/>
</dbReference>
<dbReference type="Pfam" id="PF00579">
    <property type="entry name" value="tRNA-synt_1b"/>
    <property type="match status" value="1"/>
</dbReference>
<dbReference type="PRINTS" id="PR01040">
    <property type="entry name" value="TRNASYNTHTYR"/>
</dbReference>
<dbReference type="SMART" id="SM00363">
    <property type="entry name" value="S4"/>
    <property type="match status" value="1"/>
</dbReference>
<dbReference type="SUPFAM" id="SSF55174">
    <property type="entry name" value="Alpha-L RNA-binding motif"/>
    <property type="match status" value="1"/>
</dbReference>
<dbReference type="SUPFAM" id="SSF52374">
    <property type="entry name" value="Nucleotidylyl transferase"/>
    <property type="match status" value="1"/>
</dbReference>
<dbReference type="PROSITE" id="PS00178">
    <property type="entry name" value="AA_TRNA_LIGASE_I"/>
    <property type="match status" value="1"/>
</dbReference>
<dbReference type="PROSITE" id="PS50889">
    <property type="entry name" value="S4"/>
    <property type="match status" value="1"/>
</dbReference>
<protein>
    <recommendedName>
        <fullName evidence="1">Tyrosine--tRNA ligase</fullName>
        <ecNumber evidence="1">6.1.1.1</ecNumber>
    </recommendedName>
    <alternativeName>
        <fullName evidence="1">Tyrosyl-tRNA synthetase</fullName>
        <shortName evidence="1">TyrRS</shortName>
    </alternativeName>
</protein>
<accession>Q1CIM5</accession>
<accession>C4GTC7</accession>